<comment type="function">
    <text evidence="1">Forms part of the ribosomal stalk which helps the ribosome interact with GTP-bound translation factors.</text>
</comment>
<comment type="subunit">
    <text evidence="1">Part of the ribosomal stalk of the 50S ribosomal subunit. Interacts with L10 and the large rRNA to form the base of the stalk. L10 forms an elongated spine to which L12 dimers bind in a sequential fashion forming a multimeric L10(L12)X complex.</text>
</comment>
<comment type="PTM">
    <text evidence="1">One or more lysine residues are methylated.</text>
</comment>
<comment type="similarity">
    <text evidence="1">Belongs to the universal ribosomal protein uL11 family.</text>
</comment>
<gene>
    <name evidence="1" type="primary">rplK</name>
    <name type="ordered locus">KPK_5313</name>
</gene>
<evidence type="ECO:0000255" key="1">
    <source>
        <dbReference type="HAMAP-Rule" id="MF_00736"/>
    </source>
</evidence>
<evidence type="ECO:0000305" key="2"/>
<name>RL11_KLEP3</name>
<protein>
    <recommendedName>
        <fullName evidence="1">Large ribosomal subunit protein uL11</fullName>
    </recommendedName>
    <alternativeName>
        <fullName evidence="2">50S ribosomal protein L11</fullName>
    </alternativeName>
</protein>
<accession>B5XYF9</accession>
<reference key="1">
    <citation type="journal article" date="2008" name="PLoS Genet.">
        <title>Complete genome sequence of the N2-fixing broad host range endophyte Klebsiella pneumoniae 342 and virulence predictions verified in mice.</title>
        <authorList>
            <person name="Fouts D.E."/>
            <person name="Tyler H.L."/>
            <person name="DeBoy R.T."/>
            <person name="Daugherty S."/>
            <person name="Ren Q."/>
            <person name="Badger J.H."/>
            <person name="Durkin A.S."/>
            <person name="Huot H."/>
            <person name="Shrivastava S."/>
            <person name="Kothari S."/>
            <person name="Dodson R.J."/>
            <person name="Mohamoud Y."/>
            <person name="Khouri H."/>
            <person name="Roesch L.F.W."/>
            <person name="Krogfelt K.A."/>
            <person name="Struve C."/>
            <person name="Triplett E.W."/>
            <person name="Methe B.A."/>
        </authorList>
    </citation>
    <scope>NUCLEOTIDE SEQUENCE [LARGE SCALE GENOMIC DNA]</scope>
    <source>
        <strain>342</strain>
    </source>
</reference>
<proteinExistence type="inferred from homology"/>
<feature type="chain" id="PRO_1000195654" description="Large ribosomal subunit protein uL11">
    <location>
        <begin position="1"/>
        <end position="142"/>
    </location>
</feature>
<sequence length="142" mass="14907">MAKKVQAYVKLQVAAGMANPSPPVGPALGQQGVNIMEFCKAFNAKTESMEKGLPIPVVITVYADRSFTFVTKTPPAAVLLKKAAGIKSGSGKPNKDKVGKISRAQLQEIAQTKAADMTGADIEAMTRSIEGTARSMGLVVED</sequence>
<dbReference type="EMBL" id="CP000964">
    <property type="protein sequence ID" value="ACI08722.1"/>
    <property type="molecule type" value="Genomic_DNA"/>
</dbReference>
<dbReference type="SMR" id="B5XYF9"/>
<dbReference type="KEGG" id="kpe:KPK_5313"/>
<dbReference type="HOGENOM" id="CLU_074237_2_0_6"/>
<dbReference type="Proteomes" id="UP000001734">
    <property type="component" value="Chromosome"/>
</dbReference>
<dbReference type="GO" id="GO:0022625">
    <property type="term" value="C:cytosolic large ribosomal subunit"/>
    <property type="evidence" value="ECO:0007669"/>
    <property type="project" value="TreeGrafter"/>
</dbReference>
<dbReference type="GO" id="GO:0070180">
    <property type="term" value="F:large ribosomal subunit rRNA binding"/>
    <property type="evidence" value="ECO:0007669"/>
    <property type="project" value="UniProtKB-UniRule"/>
</dbReference>
<dbReference type="GO" id="GO:0003735">
    <property type="term" value="F:structural constituent of ribosome"/>
    <property type="evidence" value="ECO:0007669"/>
    <property type="project" value="InterPro"/>
</dbReference>
<dbReference type="GO" id="GO:0006412">
    <property type="term" value="P:translation"/>
    <property type="evidence" value="ECO:0007669"/>
    <property type="project" value="UniProtKB-UniRule"/>
</dbReference>
<dbReference type="CDD" id="cd00349">
    <property type="entry name" value="Ribosomal_L11"/>
    <property type="match status" value="1"/>
</dbReference>
<dbReference type="FunFam" id="1.10.10.250:FF:000001">
    <property type="entry name" value="50S ribosomal protein L11"/>
    <property type="match status" value="1"/>
</dbReference>
<dbReference type="FunFam" id="3.30.1550.10:FF:000001">
    <property type="entry name" value="50S ribosomal protein L11"/>
    <property type="match status" value="1"/>
</dbReference>
<dbReference type="Gene3D" id="1.10.10.250">
    <property type="entry name" value="Ribosomal protein L11, C-terminal domain"/>
    <property type="match status" value="1"/>
</dbReference>
<dbReference type="Gene3D" id="3.30.1550.10">
    <property type="entry name" value="Ribosomal protein L11/L12, N-terminal domain"/>
    <property type="match status" value="1"/>
</dbReference>
<dbReference type="HAMAP" id="MF_00736">
    <property type="entry name" value="Ribosomal_uL11"/>
    <property type="match status" value="1"/>
</dbReference>
<dbReference type="InterPro" id="IPR000911">
    <property type="entry name" value="Ribosomal_uL11"/>
</dbReference>
<dbReference type="InterPro" id="IPR006519">
    <property type="entry name" value="Ribosomal_uL11_bac-typ"/>
</dbReference>
<dbReference type="InterPro" id="IPR020783">
    <property type="entry name" value="Ribosomal_uL11_C"/>
</dbReference>
<dbReference type="InterPro" id="IPR036769">
    <property type="entry name" value="Ribosomal_uL11_C_sf"/>
</dbReference>
<dbReference type="InterPro" id="IPR020785">
    <property type="entry name" value="Ribosomal_uL11_CS"/>
</dbReference>
<dbReference type="InterPro" id="IPR020784">
    <property type="entry name" value="Ribosomal_uL11_N"/>
</dbReference>
<dbReference type="InterPro" id="IPR036796">
    <property type="entry name" value="Ribosomal_uL11_N_sf"/>
</dbReference>
<dbReference type="NCBIfam" id="TIGR01632">
    <property type="entry name" value="L11_bact"/>
    <property type="match status" value="1"/>
</dbReference>
<dbReference type="PANTHER" id="PTHR11661">
    <property type="entry name" value="60S RIBOSOMAL PROTEIN L12"/>
    <property type="match status" value="1"/>
</dbReference>
<dbReference type="PANTHER" id="PTHR11661:SF1">
    <property type="entry name" value="LARGE RIBOSOMAL SUBUNIT PROTEIN UL11M"/>
    <property type="match status" value="1"/>
</dbReference>
<dbReference type="Pfam" id="PF00298">
    <property type="entry name" value="Ribosomal_L11"/>
    <property type="match status" value="1"/>
</dbReference>
<dbReference type="Pfam" id="PF03946">
    <property type="entry name" value="Ribosomal_L11_N"/>
    <property type="match status" value="1"/>
</dbReference>
<dbReference type="SMART" id="SM00649">
    <property type="entry name" value="RL11"/>
    <property type="match status" value="1"/>
</dbReference>
<dbReference type="SUPFAM" id="SSF54747">
    <property type="entry name" value="Ribosomal L11/L12e N-terminal domain"/>
    <property type="match status" value="1"/>
</dbReference>
<dbReference type="SUPFAM" id="SSF46906">
    <property type="entry name" value="Ribosomal protein L11, C-terminal domain"/>
    <property type="match status" value="1"/>
</dbReference>
<dbReference type="PROSITE" id="PS00359">
    <property type="entry name" value="RIBOSOMAL_L11"/>
    <property type="match status" value="1"/>
</dbReference>
<keyword id="KW-0488">Methylation</keyword>
<keyword id="KW-0687">Ribonucleoprotein</keyword>
<keyword id="KW-0689">Ribosomal protein</keyword>
<keyword id="KW-0694">RNA-binding</keyword>
<keyword id="KW-0699">rRNA-binding</keyword>
<organism>
    <name type="scientific">Klebsiella pneumoniae (strain 342)</name>
    <dbReference type="NCBI Taxonomy" id="507522"/>
    <lineage>
        <taxon>Bacteria</taxon>
        <taxon>Pseudomonadati</taxon>
        <taxon>Pseudomonadota</taxon>
        <taxon>Gammaproteobacteria</taxon>
        <taxon>Enterobacterales</taxon>
        <taxon>Enterobacteriaceae</taxon>
        <taxon>Klebsiella/Raoultella group</taxon>
        <taxon>Klebsiella</taxon>
        <taxon>Klebsiella pneumoniae complex</taxon>
    </lineage>
</organism>